<dbReference type="EC" id="4.1.1.15"/>
<dbReference type="EMBL" id="AF309076">
    <property type="protein sequence ID" value="AAG22560.1"/>
    <property type="molecule type" value="Genomic_DNA"/>
</dbReference>
<dbReference type="EMBL" id="AL591975">
    <property type="protein sequence ID" value="CAC98526.1"/>
    <property type="molecule type" value="Genomic_DNA"/>
</dbReference>
<dbReference type="PIR" id="AH1130">
    <property type="entry name" value="AH1130"/>
</dbReference>
<dbReference type="RefSeq" id="NP_463976.1">
    <property type="nucleotide sequence ID" value="NC_003210.1"/>
</dbReference>
<dbReference type="RefSeq" id="WP_010989470.1">
    <property type="nucleotide sequence ID" value="NC_003210.1"/>
</dbReference>
<dbReference type="SMR" id="Q9F5P3"/>
<dbReference type="STRING" id="169963.gene:17593098"/>
<dbReference type="PaxDb" id="169963-lmo0447"/>
<dbReference type="EnsemblBacteria" id="CAC98526">
    <property type="protein sequence ID" value="CAC98526"/>
    <property type="gene ID" value="CAC98526"/>
</dbReference>
<dbReference type="GeneID" id="986724"/>
<dbReference type="KEGG" id="lmo:lmo0447"/>
<dbReference type="PATRIC" id="fig|169963.11.peg.462"/>
<dbReference type="eggNOG" id="COG0076">
    <property type="taxonomic scope" value="Bacteria"/>
</dbReference>
<dbReference type="HOGENOM" id="CLU_019582_2_1_9"/>
<dbReference type="OrthoDB" id="9803665at2"/>
<dbReference type="PhylomeDB" id="Q9F5P3"/>
<dbReference type="BioCyc" id="LMON169963:LMO0447-MONOMER"/>
<dbReference type="Proteomes" id="UP000000817">
    <property type="component" value="Chromosome"/>
</dbReference>
<dbReference type="GO" id="GO:0005829">
    <property type="term" value="C:cytosol"/>
    <property type="evidence" value="ECO:0000318"/>
    <property type="project" value="GO_Central"/>
</dbReference>
<dbReference type="GO" id="GO:0004058">
    <property type="term" value="F:aromatic-L-amino-acid decarboxylase activity"/>
    <property type="evidence" value="ECO:0007669"/>
    <property type="project" value="UniProtKB-ARBA"/>
</dbReference>
<dbReference type="GO" id="GO:0004351">
    <property type="term" value="F:glutamate decarboxylase activity"/>
    <property type="evidence" value="ECO:0000318"/>
    <property type="project" value="GO_Central"/>
</dbReference>
<dbReference type="GO" id="GO:0030170">
    <property type="term" value="F:pyridoxal phosphate binding"/>
    <property type="evidence" value="ECO:0007669"/>
    <property type="project" value="InterPro"/>
</dbReference>
<dbReference type="GO" id="GO:0006538">
    <property type="term" value="P:glutamate catabolic process"/>
    <property type="evidence" value="ECO:0000318"/>
    <property type="project" value="GO_Central"/>
</dbReference>
<dbReference type="CDD" id="cd06450">
    <property type="entry name" value="DOPA_deC_like"/>
    <property type="match status" value="1"/>
</dbReference>
<dbReference type="FunFam" id="3.40.640.10:FF:000017">
    <property type="entry name" value="Glutamate decarboxylase"/>
    <property type="match status" value="1"/>
</dbReference>
<dbReference type="FunFam" id="4.10.280.50:FF:000001">
    <property type="entry name" value="Glutamate decarboxylase"/>
    <property type="match status" value="1"/>
</dbReference>
<dbReference type="Gene3D" id="3.90.1150.160">
    <property type="match status" value="1"/>
</dbReference>
<dbReference type="Gene3D" id="4.10.280.50">
    <property type="match status" value="1"/>
</dbReference>
<dbReference type="Gene3D" id="3.40.640.10">
    <property type="entry name" value="Type I PLP-dependent aspartate aminotransferase-like (Major domain)"/>
    <property type="match status" value="1"/>
</dbReference>
<dbReference type="InterPro" id="IPR010107">
    <property type="entry name" value="Glutamate_decarboxylase"/>
</dbReference>
<dbReference type="InterPro" id="IPR002129">
    <property type="entry name" value="PyrdxlP-dep_de-COase"/>
</dbReference>
<dbReference type="InterPro" id="IPR015424">
    <property type="entry name" value="PyrdxlP-dep_Trfase"/>
</dbReference>
<dbReference type="InterPro" id="IPR015421">
    <property type="entry name" value="PyrdxlP-dep_Trfase_major"/>
</dbReference>
<dbReference type="NCBIfam" id="TIGR01788">
    <property type="entry name" value="Glu-decarb-GAD"/>
    <property type="match status" value="1"/>
</dbReference>
<dbReference type="PANTHER" id="PTHR43321">
    <property type="entry name" value="GLUTAMATE DECARBOXYLASE"/>
    <property type="match status" value="1"/>
</dbReference>
<dbReference type="PANTHER" id="PTHR43321:SF3">
    <property type="entry name" value="GLUTAMATE DECARBOXYLASE"/>
    <property type="match status" value="1"/>
</dbReference>
<dbReference type="Pfam" id="PF00282">
    <property type="entry name" value="Pyridoxal_deC"/>
    <property type="match status" value="1"/>
</dbReference>
<dbReference type="SUPFAM" id="SSF53383">
    <property type="entry name" value="PLP-dependent transferases"/>
    <property type="match status" value="1"/>
</dbReference>
<sequence length="462" mass="52498">MFKTNVEQNNVPVFGSFESGQDLPEKRMNKESVDPRIAYQLVKDQLIDEGSARQNLATFCQTYMEPEAEQIMAETMEKNAIDKSEYPQTAKLESSCVNMLADLWNVDESEHYMGTSTVGSSEACMLGGMAMKFRWRSAALKNGLDIHAKKPSLVISSGYQVCWEKFCVYWDIELREVPMSEEHLSINTDIIMDYVDEYTIGIVGILGITYTGKFDDIMTLNDLVEDYNNTHDNEVVIHVDGASGAMFTPFVEPGLEWDFRLPNVVSINTSGHKYGLVYPGVGWILWRDKEYLPEELVFDVSYLGGHMPTMAINFSRSASQIIGQYYNFLRFGYEGYRQIHMRTRDGALQLSQAVAETGLFEIYNDGANLPIVCYKLKDDANVAWTLYDLADRLQMKGWQVPAYPLPKEMGNTIIQRYVCRGDLGQNMVTAFKNDLSESIEELNNAHILYHDVNTSKTHGFTH</sequence>
<feature type="chain" id="PRO_0000146988" description="Glutamate decarboxylase alpha">
    <location>
        <begin position="1"/>
        <end position="462"/>
    </location>
</feature>
<feature type="modified residue" description="N6-(pyridoxal phosphate)lysine" evidence="1">
    <location>
        <position position="273"/>
    </location>
</feature>
<feature type="sequence conflict" description="In Ref. 1; AAG22560." evidence="2" ref="1">
    <original>S</original>
    <variation>N</variation>
    <location>
        <position position="152"/>
    </location>
</feature>
<name>DCEA_LISMO</name>
<protein>
    <recommendedName>
        <fullName>Glutamate decarboxylase alpha</fullName>
        <shortName>GAD-alpha</shortName>
        <ecNumber>4.1.1.15</ecNumber>
    </recommendedName>
</protein>
<evidence type="ECO:0000250" key="1"/>
<evidence type="ECO:0000305" key="2"/>
<accession>Q9F5P3</accession>
<accession>Q8Y9S6</accession>
<organism>
    <name type="scientific">Listeria monocytogenes serovar 1/2a (strain ATCC BAA-679 / EGD-e)</name>
    <dbReference type="NCBI Taxonomy" id="169963"/>
    <lineage>
        <taxon>Bacteria</taxon>
        <taxon>Bacillati</taxon>
        <taxon>Bacillota</taxon>
        <taxon>Bacilli</taxon>
        <taxon>Bacillales</taxon>
        <taxon>Listeriaceae</taxon>
        <taxon>Listeria</taxon>
    </lineage>
</organism>
<keyword id="KW-0210">Decarboxylase</keyword>
<keyword id="KW-0456">Lyase</keyword>
<keyword id="KW-0663">Pyridoxal phosphate</keyword>
<keyword id="KW-1185">Reference proteome</keyword>
<gene>
    <name type="primary">gadA</name>
    <name type="ordered locus">lmo0447</name>
</gene>
<proteinExistence type="inferred from homology"/>
<comment type="function">
    <text>Converts internalized glutamate to GABA and increases the internal pH. Involved in glutamate-dependent acid resistance in gastric fluid.</text>
</comment>
<comment type="catalytic activity">
    <reaction>
        <text>L-glutamate + H(+) = 4-aminobutanoate + CO2</text>
        <dbReference type="Rhea" id="RHEA:17785"/>
        <dbReference type="ChEBI" id="CHEBI:15378"/>
        <dbReference type="ChEBI" id="CHEBI:16526"/>
        <dbReference type="ChEBI" id="CHEBI:29985"/>
        <dbReference type="ChEBI" id="CHEBI:59888"/>
        <dbReference type="EC" id="4.1.1.15"/>
    </reaction>
</comment>
<comment type="cofactor">
    <cofactor evidence="1">
        <name>pyridoxal 5'-phosphate</name>
        <dbReference type="ChEBI" id="CHEBI:597326"/>
    </cofactor>
</comment>
<comment type="similarity">
    <text evidence="2">Belongs to the group II decarboxylase family.</text>
</comment>
<reference key="1">
    <citation type="journal article" date="2001" name="Mol. Microbiol.">
        <title>A glutamate decarboxylase system protects Listeria monocytogenes in gastric fluid.</title>
        <authorList>
            <person name="Cotter P.D."/>
            <person name="Gahan C.G.M."/>
            <person name="Hill C."/>
        </authorList>
    </citation>
    <scope>NUCLEOTIDE SEQUENCE [GENOMIC DNA]</scope>
    <source>
        <strain>LO28 / Serovar 1/2c</strain>
    </source>
</reference>
<reference key="2">
    <citation type="journal article" date="2001" name="Science">
        <title>Comparative genomics of Listeria species.</title>
        <authorList>
            <person name="Glaser P."/>
            <person name="Frangeul L."/>
            <person name="Buchrieser C."/>
            <person name="Rusniok C."/>
            <person name="Amend A."/>
            <person name="Baquero F."/>
            <person name="Berche P."/>
            <person name="Bloecker H."/>
            <person name="Brandt P."/>
            <person name="Chakraborty T."/>
            <person name="Charbit A."/>
            <person name="Chetouani F."/>
            <person name="Couve E."/>
            <person name="de Daruvar A."/>
            <person name="Dehoux P."/>
            <person name="Domann E."/>
            <person name="Dominguez-Bernal G."/>
            <person name="Duchaud E."/>
            <person name="Durant L."/>
            <person name="Dussurget O."/>
            <person name="Entian K.-D."/>
            <person name="Fsihi H."/>
            <person name="Garcia-del Portillo F."/>
            <person name="Garrido P."/>
            <person name="Gautier L."/>
            <person name="Goebel W."/>
            <person name="Gomez-Lopez N."/>
            <person name="Hain T."/>
            <person name="Hauf J."/>
            <person name="Jackson D."/>
            <person name="Jones L.-M."/>
            <person name="Kaerst U."/>
            <person name="Kreft J."/>
            <person name="Kuhn M."/>
            <person name="Kunst F."/>
            <person name="Kurapkat G."/>
            <person name="Madueno E."/>
            <person name="Maitournam A."/>
            <person name="Mata Vicente J."/>
            <person name="Ng E."/>
            <person name="Nedjari H."/>
            <person name="Nordsiek G."/>
            <person name="Novella S."/>
            <person name="de Pablos B."/>
            <person name="Perez-Diaz J.-C."/>
            <person name="Purcell R."/>
            <person name="Remmel B."/>
            <person name="Rose M."/>
            <person name="Schlueter T."/>
            <person name="Simoes N."/>
            <person name="Tierrez A."/>
            <person name="Vazquez-Boland J.-A."/>
            <person name="Voss H."/>
            <person name="Wehland J."/>
            <person name="Cossart P."/>
        </authorList>
    </citation>
    <scope>NUCLEOTIDE SEQUENCE [LARGE SCALE GENOMIC DNA]</scope>
    <source>
        <strain>ATCC BAA-679 / EGD-e</strain>
    </source>
</reference>